<evidence type="ECO:0000250" key="1"/>
<evidence type="ECO:0000269" key="2">
    <source>
    </source>
</evidence>
<evidence type="ECO:0000305" key="3"/>
<feature type="chain" id="PRO_0000067406" description="Cellular retinoic acid-binding protein 1">
    <location>
        <begin position="1"/>
        <end position="137"/>
    </location>
</feature>
<feature type="short sequence motif" description="Nuclear localization signal" evidence="1">
    <location>
        <begin position="21"/>
        <end position="31"/>
    </location>
</feature>
<feature type="binding site" evidence="1">
    <location>
        <begin position="132"/>
        <end position="134"/>
    </location>
    <ligand>
        <name>all-trans-retinoate</name>
        <dbReference type="ChEBI" id="CHEBI:35291"/>
    </ligand>
</feature>
<feature type="sequence conflict" description="In Ref. 4; AAH22069." evidence="3" ref="4">
    <original>R</original>
    <variation>S</variation>
    <location>
        <position position="112"/>
    </location>
</feature>
<feature type="sequence conflict" description="In Ref. 3; CAG33298." evidence="3" ref="3">
    <original>E</original>
    <variation>D</variation>
    <location>
        <position position="137"/>
    </location>
</feature>
<gene>
    <name type="primary">CRABP1</name>
    <name type="synonym">RBP5</name>
</gene>
<organism>
    <name type="scientific">Homo sapiens</name>
    <name type="common">Human</name>
    <dbReference type="NCBI Taxonomy" id="9606"/>
    <lineage>
        <taxon>Eukaryota</taxon>
        <taxon>Metazoa</taxon>
        <taxon>Chordata</taxon>
        <taxon>Craniata</taxon>
        <taxon>Vertebrata</taxon>
        <taxon>Euteleostomi</taxon>
        <taxon>Mammalia</taxon>
        <taxon>Eutheria</taxon>
        <taxon>Euarchontoglires</taxon>
        <taxon>Primates</taxon>
        <taxon>Haplorrhini</taxon>
        <taxon>Catarrhini</taxon>
        <taxon>Hominidae</taxon>
        <taxon>Homo</taxon>
    </lineage>
</organism>
<name>RABP1_HUMAN</name>
<reference key="1">
    <citation type="journal article" date="1992" name="Exp. Cell Res.">
        <title>The molecular cloning and expression of two CRABP cDNAs from human skin.</title>
        <authorList>
            <person name="Eller M.S."/>
            <person name="Oleksiak M.F."/>
            <person name="McQuaid T.J."/>
            <person name="McAfee S.G."/>
            <person name="Gilchrest B.A."/>
        </authorList>
    </citation>
    <scope>NUCLEOTIDE SEQUENCE [MRNA]</scope>
</reference>
<reference key="2">
    <citation type="journal article" date="1991" name="J. Biol. Chem.">
        <title>Molecular cloning of two human cellular retinoic acid-binding proteins (CRABP). Retinoic acid-induced expression of CRABP-II but not CRABP-I in adult human skin in vivo and in skin fibroblasts in vitro.</title>
        <authorList>
            <person name="Astroem A."/>
            <person name="Tavakkol A."/>
            <person name="Pettersson U."/>
            <person name="Cromie M."/>
            <person name="Elder J.T."/>
            <person name="Voorhees J.J."/>
        </authorList>
    </citation>
    <scope>NUCLEOTIDE SEQUENCE [MRNA]</scope>
</reference>
<reference key="3">
    <citation type="submission" date="2004-06" db="EMBL/GenBank/DDBJ databases">
        <title>Cloning of human full open reading frames in Gateway(TM) system entry vector (pDONR201).</title>
        <authorList>
            <person name="Ebert L."/>
            <person name="Schick M."/>
            <person name="Neubert P."/>
            <person name="Schatten R."/>
            <person name="Henze S."/>
            <person name="Korn B."/>
        </authorList>
    </citation>
    <scope>NUCLEOTIDE SEQUENCE [LARGE SCALE MRNA]</scope>
</reference>
<reference key="4">
    <citation type="journal article" date="2004" name="Genome Res.">
        <title>The status, quality, and expansion of the NIH full-length cDNA project: the Mammalian Gene Collection (MGC).</title>
        <authorList>
            <consortium name="The MGC Project Team"/>
        </authorList>
    </citation>
    <scope>NUCLEOTIDE SEQUENCE [LARGE SCALE MRNA]</scope>
    <source>
        <tissue>Brain</tissue>
    </source>
</reference>
<reference key="5">
    <citation type="journal article" date="2002" name="Mol. Cell. Biol.">
        <title>Direct channeling of retinoic acid between cellular retinoic acid-binding protein II and retinoic acid receptor sensitizes mammary carcinoma cells to retinoic acid-induced growth arrest.</title>
        <authorList>
            <person name="Budhu A.S."/>
            <person name="Noy N."/>
        </authorList>
    </citation>
    <scope>SUBCELLULAR LOCATION</scope>
</reference>
<keyword id="KW-0002">3D-structure</keyword>
<keyword id="KW-0963">Cytoplasm</keyword>
<keyword id="KW-1267">Proteomics identification</keyword>
<keyword id="KW-1185">Reference proteome</keyword>
<keyword id="KW-0683">Retinol-binding</keyword>
<keyword id="KW-0813">Transport</keyword>
<keyword id="KW-0845">Vitamin A</keyword>
<dbReference type="EMBL" id="S74445">
    <property type="protein sequence ID" value="AAB20773.1"/>
    <property type="molecule type" value="mRNA"/>
</dbReference>
<dbReference type="EMBL" id="CR457017">
    <property type="protein sequence ID" value="CAG33298.1"/>
    <property type="molecule type" value="mRNA"/>
</dbReference>
<dbReference type="EMBL" id="BC022069">
    <property type="protein sequence ID" value="AAH22069.1"/>
    <property type="molecule type" value="mRNA"/>
</dbReference>
<dbReference type="CCDS" id="CCDS10301.1"/>
<dbReference type="PIR" id="JH0548">
    <property type="entry name" value="RJHU1"/>
</dbReference>
<dbReference type="RefSeq" id="NP_004369.1">
    <property type="nucleotide sequence ID" value="NM_004378.3"/>
</dbReference>
<dbReference type="PDB" id="7A9Y">
    <property type="method" value="X-ray"/>
    <property type="resolution" value="1.64 A"/>
    <property type="chains" value="AAA/BBB=1-137"/>
</dbReference>
<dbReference type="PDB" id="7A9Z">
    <property type="method" value="X-ray"/>
    <property type="resolution" value="2.41 A"/>
    <property type="chains" value="AAA/BBB=1-137"/>
</dbReference>
<dbReference type="PDBsum" id="7A9Y"/>
<dbReference type="PDBsum" id="7A9Z"/>
<dbReference type="BMRB" id="P29762"/>
<dbReference type="SMR" id="P29762"/>
<dbReference type="BioGRID" id="107772">
    <property type="interactions" value="11"/>
</dbReference>
<dbReference type="FunCoup" id="P29762">
    <property type="interactions" value="573"/>
</dbReference>
<dbReference type="IntAct" id="P29762">
    <property type="interactions" value="14"/>
</dbReference>
<dbReference type="MINT" id="P29762"/>
<dbReference type="STRING" id="9606.ENSP00000299529"/>
<dbReference type="ChEMBL" id="CHEMBL2079"/>
<dbReference type="DrugBank" id="DB00523">
    <property type="generic name" value="Alitretinoin"/>
</dbReference>
<dbReference type="DrugBank" id="DB00926">
    <property type="generic name" value="Etretinate"/>
</dbReference>
<dbReference type="DrugBank" id="DB04942">
    <property type="generic name" value="Tamibarotene"/>
</dbReference>
<dbReference type="DrugBank" id="DB00755">
    <property type="generic name" value="Tretinoin"/>
</dbReference>
<dbReference type="iPTMnet" id="P29762"/>
<dbReference type="PhosphoSitePlus" id="P29762"/>
<dbReference type="BioMuta" id="CRABP1"/>
<dbReference type="DMDM" id="266904"/>
<dbReference type="jPOST" id="P29762"/>
<dbReference type="MassIVE" id="P29762"/>
<dbReference type="PaxDb" id="9606-ENSP00000299529"/>
<dbReference type="PeptideAtlas" id="P29762"/>
<dbReference type="ProteomicsDB" id="54609"/>
<dbReference type="Pumba" id="P29762"/>
<dbReference type="Antibodypedia" id="1541">
    <property type="antibodies" value="252 antibodies from 31 providers"/>
</dbReference>
<dbReference type="DNASU" id="1381"/>
<dbReference type="Ensembl" id="ENST00000299529.7">
    <property type="protein sequence ID" value="ENSP00000299529.6"/>
    <property type="gene ID" value="ENSG00000166426.8"/>
</dbReference>
<dbReference type="GeneID" id="1381"/>
<dbReference type="KEGG" id="hsa:1381"/>
<dbReference type="MANE-Select" id="ENST00000299529.7">
    <property type="protein sequence ID" value="ENSP00000299529.6"/>
    <property type="RefSeq nucleotide sequence ID" value="NM_004378.3"/>
    <property type="RefSeq protein sequence ID" value="NP_004369.1"/>
</dbReference>
<dbReference type="UCSC" id="uc002bdp.2">
    <property type="organism name" value="human"/>
</dbReference>
<dbReference type="AGR" id="HGNC:2338"/>
<dbReference type="CTD" id="1381"/>
<dbReference type="DisGeNET" id="1381"/>
<dbReference type="GeneCards" id="CRABP1"/>
<dbReference type="HGNC" id="HGNC:2338">
    <property type="gene designation" value="CRABP1"/>
</dbReference>
<dbReference type="HPA" id="ENSG00000166426">
    <property type="expression patterns" value="Tissue enhanced (retina, thyroid gland)"/>
</dbReference>
<dbReference type="MIM" id="180230">
    <property type="type" value="gene"/>
</dbReference>
<dbReference type="neXtProt" id="NX_P29762"/>
<dbReference type="OpenTargets" id="ENSG00000166426"/>
<dbReference type="PharmGKB" id="PA26858"/>
<dbReference type="VEuPathDB" id="HostDB:ENSG00000166426"/>
<dbReference type="eggNOG" id="KOG4015">
    <property type="taxonomic scope" value="Eukaryota"/>
</dbReference>
<dbReference type="GeneTree" id="ENSGT00940000159422"/>
<dbReference type="HOGENOM" id="CLU_113772_0_2_1"/>
<dbReference type="InParanoid" id="P29762"/>
<dbReference type="OMA" id="MPNFAGN"/>
<dbReference type="OrthoDB" id="195110at2759"/>
<dbReference type="PAN-GO" id="P29762">
    <property type="GO annotations" value="5 GO annotations based on evolutionary models"/>
</dbReference>
<dbReference type="PhylomeDB" id="P29762"/>
<dbReference type="TreeFam" id="TF316894"/>
<dbReference type="PathwayCommons" id="P29762"/>
<dbReference type="Reactome" id="R-HSA-5365859">
    <property type="pathway name" value="RA biosynthesis pathway"/>
</dbReference>
<dbReference type="SignaLink" id="P29762"/>
<dbReference type="BioGRID-ORCS" id="1381">
    <property type="hits" value="5 hits in 1143 CRISPR screens"/>
</dbReference>
<dbReference type="CD-CODE" id="8C2F96ED">
    <property type="entry name" value="Centrosome"/>
</dbReference>
<dbReference type="GeneWiki" id="CRABP1"/>
<dbReference type="GenomeRNAi" id="1381"/>
<dbReference type="Pharos" id="P29762">
    <property type="development level" value="Tbio"/>
</dbReference>
<dbReference type="PRO" id="PR:P29762"/>
<dbReference type="Proteomes" id="UP000005640">
    <property type="component" value="Chromosome 15"/>
</dbReference>
<dbReference type="RNAct" id="P29762">
    <property type="molecule type" value="protein"/>
</dbReference>
<dbReference type="Bgee" id="ENSG00000166426">
    <property type="expression patterns" value="Expressed in left lobe of thyroid gland and 142 other cell types or tissues"/>
</dbReference>
<dbReference type="ExpressionAtlas" id="P29762">
    <property type="expression patterns" value="baseline and differential"/>
</dbReference>
<dbReference type="GO" id="GO:0005829">
    <property type="term" value="C:cytosol"/>
    <property type="evidence" value="ECO:0000318"/>
    <property type="project" value="GO_Central"/>
</dbReference>
<dbReference type="GO" id="GO:0005634">
    <property type="term" value="C:nucleus"/>
    <property type="evidence" value="ECO:0000318"/>
    <property type="project" value="GO_Central"/>
</dbReference>
<dbReference type="GO" id="GO:0005504">
    <property type="term" value="F:fatty acid binding"/>
    <property type="evidence" value="ECO:0000318"/>
    <property type="project" value="GO_Central"/>
</dbReference>
<dbReference type="GO" id="GO:0016918">
    <property type="term" value="F:retinal binding"/>
    <property type="evidence" value="ECO:0007669"/>
    <property type="project" value="UniProtKB-KW"/>
</dbReference>
<dbReference type="GO" id="GO:0001972">
    <property type="term" value="F:retinoic acid binding"/>
    <property type="evidence" value="ECO:0000318"/>
    <property type="project" value="GO_Central"/>
</dbReference>
<dbReference type="GO" id="GO:0005501">
    <property type="term" value="F:retinoid binding"/>
    <property type="evidence" value="ECO:0000304"/>
    <property type="project" value="ProtInc"/>
</dbReference>
<dbReference type="GO" id="GO:0019841">
    <property type="term" value="F:retinol binding"/>
    <property type="evidence" value="ECO:0007669"/>
    <property type="project" value="UniProtKB-KW"/>
</dbReference>
<dbReference type="GO" id="GO:0015908">
    <property type="term" value="P:fatty acid transport"/>
    <property type="evidence" value="ECO:0000318"/>
    <property type="project" value="GO_Central"/>
</dbReference>
<dbReference type="GO" id="GO:0007165">
    <property type="term" value="P:signal transduction"/>
    <property type="evidence" value="ECO:0000304"/>
    <property type="project" value="ProtInc"/>
</dbReference>
<dbReference type="CDD" id="cd19460">
    <property type="entry name" value="CRABP1"/>
    <property type="match status" value="1"/>
</dbReference>
<dbReference type="FunFam" id="2.40.128.20:FF:000001">
    <property type="entry name" value="Fatty acid-binding protein, adipocyte"/>
    <property type="match status" value="1"/>
</dbReference>
<dbReference type="Gene3D" id="2.40.128.20">
    <property type="match status" value="1"/>
</dbReference>
<dbReference type="InterPro" id="IPR012674">
    <property type="entry name" value="Calycin"/>
</dbReference>
<dbReference type="InterPro" id="IPR000463">
    <property type="entry name" value="Fatty_acid-bd"/>
</dbReference>
<dbReference type="InterPro" id="IPR031259">
    <property type="entry name" value="ILBP"/>
</dbReference>
<dbReference type="InterPro" id="IPR000566">
    <property type="entry name" value="Lipocln_cytosolic_FA-bd_dom"/>
</dbReference>
<dbReference type="PANTHER" id="PTHR11955">
    <property type="entry name" value="FATTY ACID BINDING PROTEIN"/>
    <property type="match status" value="1"/>
</dbReference>
<dbReference type="Pfam" id="PF00061">
    <property type="entry name" value="Lipocalin"/>
    <property type="match status" value="1"/>
</dbReference>
<dbReference type="PRINTS" id="PR00178">
    <property type="entry name" value="FATTYACIDBP"/>
</dbReference>
<dbReference type="SUPFAM" id="SSF50814">
    <property type="entry name" value="Lipocalins"/>
    <property type="match status" value="1"/>
</dbReference>
<dbReference type="PROSITE" id="PS00214">
    <property type="entry name" value="FABP"/>
    <property type="match status" value="1"/>
</dbReference>
<comment type="function">
    <text>Cytosolic CRABPs may regulate the access of retinoic acid to the nuclear retinoic acid receptors.</text>
</comment>
<comment type="interaction">
    <interactant intactId="EBI-725950">
        <id>P29762</id>
    </interactant>
    <interactant intactId="EBI-349854">
        <id>P13569</id>
        <label>CFTR</label>
    </interactant>
    <organismsDiffer>false</organismsDiffer>
    <experiments>4</experiments>
</comment>
<comment type="interaction">
    <interactant intactId="EBI-725950">
        <id>P29762</id>
    </interactant>
    <interactant intactId="EBI-349787">
        <id>O14745</id>
        <label>NHERF1</label>
    </interactant>
    <organismsDiffer>false</organismsDiffer>
    <experiments>3</experiments>
</comment>
<comment type="interaction">
    <interactant intactId="EBI-725950">
        <id>P29762</id>
    </interactant>
    <interactant intactId="EBI-12001016">
        <id>P07101-3</id>
        <label>TH</label>
    </interactant>
    <organismsDiffer>false</organismsDiffer>
    <experiments>3</experiments>
</comment>
<comment type="interaction">
    <interactant intactId="EBI-725950">
        <id>P29762</id>
    </interactant>
    <interactant intactId="EBI-6623146">
        <id>P30536</id>
        <label>TSPO</label>
    </interactant>
    <organismsDiffer>false</organismsDiffer>
    <experiments>2</experiments>
</comment>
<comment type="interaction">
    <interactant intactId="EBI-725950">
        <id>P29762</id>
    </interactant>
    <interactant intactId="EBI-8753518">
        <id>PRO_0000037576</id>
        <dbReference type="UniProtKB" id="P27958"/>
    </interactant>
    <organismsDiffer>true</organismsDiffer>
    <experiments>3</experiments>
</comment>
<comment type="subcellular location">
    <subcellularLocation>
        <location evidence="2">Cytoplasm</location>
    </subcellularLocation>
</comment>
<comment type="domain">
    <text evidence="1">Forms a beta-barrel structure that accommodates hydrophobic ligands in its interior.</text>
</comment>
<comment type="similarity">
    <text evidence="3">Belongs to the calycin superfamily. Fatty-acid binding protein (FABP) family.</text>
</comment>
<accession>P29762</accession>
<accession>Q6IAY7</accession>
<accession>Q8WTV5</accession>
<sequence>MPNFAGTWKMRSSENFDELLKALGVNAMLRKVAVAAASKPHVEIRQDGDQFYIKTSTTVRTTEINFKVGEGFEEETVDGRKCRSLATWENENKIHCTQTLLEGDGPKTYWTRELANDELILTFGADDVVCTRIYVRE</sequence>
<proteinExistence type="evidence at protein level"/>
<protein>
    <recommendedName>
        <fullName>Cellular retinoic acid-binding protein 1</fullName>
    </recommendedName>
    <alternativeName>
        <fullName>Cellular retinoic acid-binding protein I</fullName>
        <shortName>CRABP-I</shortName>
    </alternativeName>
</protein>